<dbReference type="EC" id="2.7.1.11" evidence="1"/>
<dbReference type="EMBL" id="AE015928">
    <property type="protein sequence ID" value="AAO77169.1"/>
    <property type="molecule type" value="Genomic_DNA"/>
</dbReference>
<dbReference type="RefSeq" id="NP_810975.1">
    <property type="nucleotide sequence ID" value="NC_004663.1"/>
</dbReference>
<dbReference type="SMR" id="Q8A624"/>
<dbReference type="FunCoup" id="Q8A624">
    <property type="interactions" value="487"/>
</dbReference>
<dbReference type="STRING" id="226186.BT_2062"/>
<dbReference type="PaxDb" id="226186-BT_2062"/>
<dbReference type="EnsemblBacteria" id="AAO77169">
    <property type="protein sequence ID" value="AAO77169"/>
    <property type="gene ID" value="BT_2062"/>
</dbReference>
<dbReference type="KEGG" id="bth:BT_2062"/>
<dbReference type="PATRIC" id="fig|226186.12.peg.2120"/>
<dbReference type="eggNOG" id="COG0205">
    <property type="taxonomic scope" value="Bacteria"/>
</dbReference>
<dbReference type="HOGENOM" id="CLU_020655_0_1_10"/>
<dbReference type="InParanoid" id="Q8A624"/>
<dbReference type="OrthoDB" id="9802503at2"/>
<dbReference type="UniPathway" id="UPA00109">
    <property type="reaction ID" value="UER00182"/>
</dbReference>
<dbReference type="Proteomes" id="UP000001414">
    <property type="component" value="Chromosome"/>
</dbReference>
<dbReference type="GO" id="GO:0005945">
    <property type="term" value="C:6-phosphofructokinase complex"/>
    <property type="evidence" value="ECO:0000318"/>
    <property type="project" value="GO_Central"/>
</dbReference>
<dbReference type="GO" id="GO:0003872">
    <property type="term" value="F:6-phosphofructokinase activity"/>
    <property type="evidence" value="ECO:0000318"/>
    <property type="project" value="GO_Central"/>
</dbReference>
<dbReference type="GO" id="GO:0005524">
    <property type="term" value="F:ATP binding"/>
    <property type="evidence" value="ECO:0007669"/>
    <property type="project" value="UniProtKB-KW"/>
</dbReference>
<dbReference type="GO" id="GO:0070095">
    <property type="term" value="F:fructose-6-phosphate binding"/>
    <property type="evidence" value="ECO:0000318"/>
    <property type="project" value="GO_Central"/>
</dbReference>
<dbReference type="GO" id="GO:0046872">
    <property type="term" value="F:metal ion binding"/>
    <property type="evidence" value="ECO:0007669"/>
    <property type="project" value="UniProtKB-KW"/>
</dbReference>
<dbReference type="GO" id="GO:0061621">
    <property type="term" value="P:canonical glycolysis"/>
    <property type="evidence" value="ECO:0000318"/>
    <property type="project" value="GO_Central"/>
</dbReference>
<dbReference type="GO" id="GO:0030388">
    <property type="term" value="P:fructose 1,6-bisphosphate metabolic process"/>
    <property type="evidence" value="ECO:0000318"/>
    <property type="project" value="GO_Central"/>
</dbReference>
<dbReference type="GO" id="GO:0006002">
    <property type="term" value="P:fructose 6-phosphate metabolic process"/>
    <property type="evidence" value="ECO:0000318"/>
    <property type="project" value="GO_Central"/>
</dbReference>
<dbReference type="FunFam" id="3.40.50.450:FF:000001">
    <property type="entry name" value="ATP-dependent 6-phosphofructokinase"/>
    <property type="match status" value="1"/>
</dbReference>
<dbReference type="FunFam" id="3.40.50.460:FF:000006">
    <property type="entry name" value="ATP-dependent 6-phosphofructokinase"/>
    <property type="match status" value="1"/>
</dbReference>
<dbReference type="Gene3D" id="3.40.50.450">
    <property type="match status" value="1"/>
</dbReference>
<dbReference type="Gene3D" id="3.40.50.460">
    <property type="entry name" value="Phosphofructokinase domain"/>
    <property type="match status" value="1"/>
</dbReference>
<dbReference type="HAMAP" id="MF_00339">
    <property type="entry name" value="Phosphofructokinase_I_B1"/>
    <property type="match status" value="1"/>
</dbReference>
<dbReference type="InterPro" id="IPR022953">
    <property type="entry name" value="ATP_PFK"/>
</dbReference>
<dbReference type="InterPro" id="IPR012003">
    <property type="entry name" value="ATP_PFK_prok-type"/>
</dbReference>
<dbReference type="InterPro" id="IPR012828">
    <property type="entry name" value="PFKA_ATP_prok"/>
</dbReference>
<dbReference type="InterPro" id="IPR015912">
    <property type="entry name" value="Phosphofructokinase_CS"/>
</dbReference>
<dbReference type="InterPro" id="IPR000023">
    <property type="entry name" value="Phosphofructokinase_dom"/>
</dbReference>
<dbReference type="InterPro" id="IPR035966">
    <property type="entry name" value="PKF_sf"/>
</dbReference>
<dbReference type="NCBIfam" id="TIGR02482">
    <property type="entry name" value="PFKA_ATP"/>
    <property type="match status" value="1"/>
</dbReference>
<dbReference type="NCBIfam" id="NF002872">
    <property type="entry name" value="PRK03202.1"/>
    <property type="match status" value="1"/>
</dbReference>
<dbReference type="PANTHER" id="PTHR13697:SF4">
    <property type="entry name" value="ATP-DEPENDENT 6-PHOSPHOFRUCTOKINASE"/>
    <property type="match status" value="1"/>
</dbReference>
<dbReference type="PANTHER" id="PTHR13697">
    <property type="entry name" value="PHOSPHOFRUCTOKINASE"/>
    <property type="match status" value="1"/>
</dbReference>
<dbReference type="Pfam" id="PF00365">
    <property type="entry name" value="PFK"/>
    <property type="match status" value="1"/>
</dbReference>
<dbReference type="PIRSF" id="PIRSF000532">
    <property type="entry name" value="ATP_PFK_prok"/>
    <property type="match status" value="1"/>
</dbReference>
<dbReference type="PRINTS" id="PR00476">
    <property type="entry name" value="PHFRCTKINASE"/>
</dbReference>
<dbReference type="SUPFAM" id="SSF53784">
    <property type="entry name" value="Phosphofructokinase"/>
    <property type="match status" value="1"/>
</dbReference>
<dbReference type="PROSITE" id="PS00433">
    <property type="entry name" value="PHOSPHOFRUCTOKINASE"/>
    <property type="match status" value="1"/>
</dbReference>
<accession>Q8A624</accession>
<sequence>MGTVKCIGILTSGGDAPGMNAAIRAVTRAAIYNGLQVKGIYRGYKGLVTGEIKEFKSQNVSNIIQLGGTILKTARCKEFTTPEGRQLAYDNMKREGIDALVIIGGDGSLTGARIFAQEFDVPCIGLPGTIDNDLYGTDTTIGYDTALNTILDAVDKIRDTATSHERLFFVEVMGRDAGFLALNGAIASGAEAAIIPEFSTEVDQLEEFIKNGFRKSKNSSIVLVAESELTGGAMHYAERVKNEYPQYDVRVTILGHLQRGGSPTAHDRILASRLGAAAIDAIMEDQRNVMIGIEHDEIVYVPFSKAIKNDKPVKRDLVNVLKELSI</sequence>
<feature type="chain" id="PRO_0000111938" description="ATP-dependent 6-phosphofructokinase 2">
    <location>
        <begin position="1"/>
        <end position="326"/>
    </location>
</feature>
<feature type="active site" description="Proton acceptor" evidence="1">
    <location>
        <position position="131"/>
    </location>
</feature>
<feature type="binding site" evidence="1">
    <location>
        <position position="14"/>
    </location>
    <ligand>
        <name>ATP</name>
        <dbReference type="ChEBI" id="CHEBI:30616"/>
    </ligand>
</feature>
<feature type="binding site" evidence="1">
    <location>
        <begin position="24"/>
        <end position="28"/>
    </location>
    <ligand>
        <name>ADP</name>
        <dbReference type="ChEBI" id="CHEBI:456216"/>
        <note>allosteric activator; ligand shared between dimeric partners</note>
    </ligand>
</feature>
<feature type="binding site" evidence="1">
    <location>
        <begin position="75"/>
        <end position="76"/>
    </location>
    <ligand>
        <name>ATP</name>
        <dbReference type="ChEBI" id="CHEBI:30616"/>
    </ligand>
</feature>
<feature type="binding site" evidence="1">
    <location>
        <begin position="105"/>
        <end position="108"/>
    </location>
    <ligand>
        <name>ATP</name>
        <dbReference type="ChEBI" id="CHEBI:30616"/>
    </ligand>
</feature>
<feature type="binding site" evidence="1">
    <location>
        <position position="106"/>
    </location>
    <ligand>
        <name>Mg(2+)</name>
        <dbReference type="ChEBI" id="CHEBI:18420"/>
        <note>catalytic</note>
    </ligand>
</feature>
<feature type="binding site" description="in other chain" evidence="1">
    <location>
        <begin position="129"/>
        <end position="131"/>
    </location>
    <ligand>
        <name>substrate</name>
        <note>ligand shared between dimeric partners</note>
    </ligand>
</feature>
<feature type="binding site" description="in other chain" evidence="1">
    <location>
        <position position="158"/>
    </location>
    <ligand>
        <name>ADP</name>
        <dbReference type="ChEBI" id="CHEBI:456216"/>
        <note>allosteric activator; ligand shared between dimeric partners</note>
    </ligand>
</feature>
<feature type="binding site" evidence="1">
    <location>
        <position position="166"/>
    </location>
    <ligand>
        <name>substrate</name>
        <note>ligand shared between dimeric partners</note>
    </ligand>
</feature>
<feature type="binding site" description="in other chain" evidence="1">
    <location>
        <begin position="173"/>
        <end position="175"/>
    </location>
    <ligand>
        <name>substrate</name>
        <note>ligand shared between dimeric partners</note>
    </ligand>
</feature>
<feature type="binding site" description="in other chain" evidence="1">
    <location>
        <begin position="189"/>
        <end position="191"/>
    </location>
    <ligand>
        <name>ADP</name>
        <dbReference type="ChEBI" id="CHEBI:456216"/>
        <note>allosteric activator; ligand shared between dimeric partners</note>
    </ligand>
</feature>
<feature type="binding site" description="in other chain" evidence="1">
    <location>
        <position position="215"/>
    </location>
    <ligand>
        <name>ADP</name>
        <dbReference type="ChEBI" id="CHEBI:456216"/>
        <note>allosteric activator; ligand shared between dimeric partners</note>
    </ligand>
</feature>
<feature type="binding site" description="in other chain" evidence="1">
    <location>
        <begin position="217"/>
        <end position="219"/>
    </location>
    <ligand>
        <name>ADP</name>
        <dbReference type="ChEBI" id="CHEBI:456216"/>
        <note>allosteric activator; ligand shared between dimeric partners</note>
    </ligand>
</feature>
<feature type="binding site" description="in other chain" evidence="1">
    <location>
        <position position="226"/>
    </location>
    <ligand>
        <name>substrate</name>
        <note>ligand shared between dimeric partners</note>
    </ligand>
</feature>
<feature type="binding site" evidence="1">
    <location>
        <position position="250"/>
    </location>
    <ligand>
        <name>substrate</name>
        <note>ligand shared between dimeric partners</note>
    </ligand>
</feature>
<feature type="binding site" description="in other chain" evidence="1">
    <location>
        <begin position="256"/>
        <end position="259"/>
    </location>
    <ligand>
        <name>substrate</name>
        <note>ligand shared between dimeric partners</note>
    </ligand>
</feature>
<organism>
    <name type="scientific">Bacteroides thetaiotaomicron (strain ATCC 29148 / DSM 2079 / JCM 5827 / CCUG 10774 / NCTC 10582 / VPI-5482 / E50)</name>
    <dbReference type="NCBI Taxonomy" id="226186"/>
    <lineage>
        <taxon>Bacteria</taxon>
        <taxon>Pseudomonadati</taxon>
        <taxon>Bacteroidota</taxon>
        <taxon>Bacteroidia</taxon>
        <taxon>Bacteroidales</taxon>
        <taxon>Bacteroidaceae</taxon>
        <taxon>Bacteroides</taxon>
    </lineage>
</organism>
<gene>
    <name evidence="1" type="primary">pfkA2</name>
    <name type="ordered locus">BT_2062</name>
</gene>
<comment type="function">
    <text evidence="1">Catalyzes the phosphorylation of D-fructose 6-phosphate to fructose 1,6-bisphosphate by ATP, the first committing step of glycolysis.</text>
</comment>
<comment type="catalytic activity">
    <reaction evidence="1">
        <text>beta-D-fructose 6-phosphate + ATP = beta-D-fructose 1,6-bisphosphate + ADP + H(+)</text>
        <dbReference type="Rhea" id="RHEA:16109"/>
        <dbReference type="ChEBI" id="CHEBI:15378"/>
        <dbReference type="ChEBI" id="CHEBI:30616"/>
        <dbReference type="ChEBI" id="CHEBI:32966"/>
        <dbReference type="ChEBI" id="CHEBI:57634"/>
        <dbReference type="ChEBI" id="CHEBI:456216"/>
        <dbReference type="EC" id="2.7.1.11"/>
    </reaction>
</comment>
<comment type="cofactor">
    <cofactor evidence="1">
        <name>Mg(2+)</name>
        <dbReference type="ChEBI" id="CHEBI:18420"/>
    </cofactor>
</comment>
<comment type="activity regulation">
    <text evidence="1">Allosterically activated by ADP and other diphosphonucleosides, and allosterically inhibited by phosphoenolpyruvate.</text>
</comment>
<comment type="pathway">
    <text evidence="1">Carbohydrate degradation; glycolysis; D-glyceraldehyde 3-phosphate and glycerone phosphate from D-glucose: step 3/4.</text>
</comment>
<comment type="subunit">
    <text evidence="1">Homotetramer.</text>
</comment>
<comment type="subcellular location">
    <subcellularLocation>
        <location evidence="1">Cytoplasm</location>
    </subcellularLocation>
</comment>
<comment type="similarity">
    <text evidence="1">Belongs to the phosphofructokinase type A (PFKA) family. ATP-dependent PFK group I subfamily. Prokaryotic clade 'B1' sub-subfamily.</text>
</comment>
<evidence type="ECO:0000255" key="1">
    <source>
        <dbReference type="HAMAP-Rule" id="MF_00339"/>
    </source>
</evidence>
<keyword id="KW-0021">Allosteric enzyme</keyword>
<keyword id="KW-0067">ATP-binding</keyword>
<keyword id="KW-0963">Cytoplasm</keyword>
<keyword id="KW-0324">Glycolysis</keyword>
<keyword id="KW-0418">Kinase</keyword>
<keyword id="KW-0460">Magnesium</keyword>
<keyword id="KW-0479">Metal-binding</keyword>
<keyword id="KW-0547">Nucleotide-binding</keyword>
<keyword id="KW-1185">Reference proteome</keyword>
<keyword id="KW-0808">Transferase</keyword>
<name>PFKA2_BACTN</name>
<protein>
    <recommendedName>
        <fullName evidence="1">ATP-dependent 6-phosphofructokinase 2</fullName>
        <shortName evidence="1">ATP-PFK 2</shortName>
        <shortName evidence="1">Phosphofructokinase 2</shortName>
        <ecNumber evidence="1">2.7.1.11</ecNumber>
    </recommendedName>
    <alternativeName>
        <fullName evidence="1">Phosphohexokinase 2</fullName>
    </alternativeName>
</protein>
<proteinExistence type="inferred from homology"/>
<reference key="1">
    <citation type="journal article" date="2003" name="Science">
        <title>A genomic view of the human-Bacteroides thetaiotaomicron symbiosis.</title>
        <authorList>
            <person name="Xu J."/>
            <person name="Bjursell M.K."/>
            <person name="Himrod J."/>
            <person name="Deng S."/>
            <person name="Carmichael L.K."/>
            <person name="Chiang H.C."/>
            <person name="Hooper L.V."/>
            <person name="Gordon J.I."/>
        </authorList>
    </citation>
    <scope>NUCLEOTIDE SEQUENCE [LARGE SCALE GENOMIC DNA]</scope>
    <source>
        <strain>ATCC 29148 / DSM 2079 / JCM 5827 / CCUG 10774 / NCTC 10582 / VPI-5482 / E50</strain>
    </source>
</reference>